<dbReference type="EC" id="3.2.1.28" evidence="1"/>
<dbReference type="EMBL" id="CP000970">
    <property type="protein sequence ID" value="ACB16197.1"/>
    <property type="molecule type" value="Genomic_DNA"/>
</dbReference>
<dbReference type="RefSeq" id="WP_000934216.1">
    <property type="nucleotide sequence ID" value="NC_010498.1"/>
</dbReference>
<dbReference type="SMR" id="B1LJ63"/>
<dbReference type="CAZy" id="GH37">
    <property type="family name" value="Glycoside Hydrolase Family 37"/>
</dbReference>
<dbReference type="KEGG" id="ecm:EcSMS35_3823"/>
<dbReference type="HOGENOM" id="CLU_006451_3_1_6"/>
<dbReference type="UniPathway" id="UPA00300">
    <property type="reaction ID" value="UER00535"/>
</dbReference>
<dbReference type="Proteomes" id="UP000007011">
    <property type="component" value="Chromosome"/>
</dbReference>
<dbReference type="GO" id="GO:0005737">
    <property type="term" value="C:cytoplasm"/>
    <property type="evidence" value="ECO:0007669"/>
    <property type="project" value="UniProtKB-SubCell"/>
</dbReference>
<dbReference type="GO" id="GO:0004555">
    <property type="term" value="F:alpha,alpha-trehalase activity"/>
    <property type="evidence" value="ECO:0007669"/>
    <property type="project" value="UniProtKB-UniRule"/>
</dbReference>
<dbReference type="GO" id="GO:0071474">
    <property type="term" value="P:cellular hyperosmotic response"/>
    <property type="evidence" value="ECO:0007669"/>
    <property type="project" value="InterPro"/>
</dbReference>
<dbReference type="GO" id="GO:0005993">
    <property type="term" value="P:trehalose catabolic process"/>
    <property type="evidence" value="ECO:0007669"/>
    <property type="project" value="UniProtKB-UniRule"/>
</dbReference>
<dbReference type="FunFam" id="1.50.10.10:FF:000003">
    <property type="entry name" value="Cytoplasmic trehalase"/>
    <property type="match status" value="1"/>
</dbReference>
<dbReference type="Gene3D" id="1.50.10.10">
    <property type="match status" value="1"/>
</dbReference>
<dbReference type="HAMAP" id="MF_01059">
    <property type="entry name" value="Cyt_trehalase"/>
    <property type="match status" value="1"/>
</dbReference>
<dbReference type="InterPro" id="IPR008928">
    <property type="entry name" value="6-hairpin_glycosidase_sf"/>
</dbReference>
<dbReference type="InterPro" id="IPR012341">
    <property type="entry name" value="6hp_glycosidase-like_sf"/>
</dbReference>
<dbReference type="InterPro" id="IPR023715">
    <property type="entry name" value="Cyt_trehalase"/>
</dbReference>
<dbReference type="InterPro" id="IPR001661">
    <property type="entry name" value="Glyco_hydro_37"/>
</dbReference>
<dbReference type="InterPro" id="IPR018232">
    <property type="entry name" value="Glyco_hydro_37_CS"/>
</dbReference>
<dbReference type="NCBIfam" id="NF009773">
    <property type="entry name" value="PRK13270.1"/>
    <property type="match status" value="1"/>
</dbReference>
<dbReference type="NCBIfam" id="NF009774">
    <property type="entry name" value="PRK13271.1"/>
    <property type="match status" value="1"/>
</dbReference>
<dbReference type="PANTHER" id="PTHR23403:SF8">
    <property type="entry name" value="CYTOPLASMIC TREHALASE"/>
    <property type="match status" value="1"/>
</dbReference>
<dbReference type="PANTHER" id="PTHR23403">
    <property type="entry name" value="TREHALASE"/>
    <property type="match status" value="1"/>
</dbReference>
<dbReference type="Pfam" id="PF01204">
    <property type="entry name" value="Trehalase"/>
    <property type="match status" value="1"/>
</dbReference>
<dbReference type="PRINTS" id="PR00744">
    <property type="entry name" value="GLHYDRLASE37"/>
</dbReference>
<dbReference type="SUPFAM" id="SSF48208">
    <property type="entry name" value="Six-hairpin glycosidases"/>
    <property type="match status" value="1"/>
</dbReference>
<dbReference type="PROSITE" id="PS00927">
    <property type="entry name" value="TREHALASE_1"/>
    <property type="match status" value="1"/>
</dbReference>
<dbReference type="PROSITE" id="PS00928">
    <property type="entry name" value="TREHALASE_2"/>
    <property type="match status" value="1"/>
</dbReference>
<name>TREF_ECOSM</name>
<evidence type="ECO:0000255" key="1">
    <source>
        <dbReference type="HAMAP-Rule" id="MF_01059"/>
    </source>
</evidence>
<keyword id="KW-0963">Cytoplasm</keyword>
<keyword id="KW-0326">Glycosidase</keyword>
<keyword id="KW-0378">Hydrolase</keyword>
<proteinExistence type="inferred from homology"/>
<feature type="chain" id="PRO_1000136406" description="Cytoplasmic trehalase">
    <location>
        <begin position="1"/>
        <end position="549"/>
    </location>
</feature>
<feature type="active site" description="Proton donor/acceptor" evidence="1">
    <location>
        <position position="326"/>
    </location>
</feature>
<feature type="active site" description="Proton donor/acceptor" evidence="1">
    <location>
        <position position="509"/>
    </location>
</feature>
<feature type="binding site" evidence="1">
    <location>
        <position position="168"/>
    </location>
    <ligand>
        <name>substrate</name>
    </ligand>
</feature>
<feature type="binding site" evidence="1">
    <location>
        <begin position="175"/>
        <end position="176"/>
    </location>
    <ligand>
        <name>substrate</name>
    </ligand>
</feature>
<feature type="binding site" evidence="1">
    <location>
        <position position="212"/>
    </location>
    <ligand>
        <name>substrate</name>
    </ligand>
</feature>
<feature type="binding site" evidence="1">
    <location>
        <begin position="221"/>
        <end position="223"/>
    </location>
    <ligand>
        <name>substrate</name>
    </ligand>
</feature>
<feature type="binding site" evidence="1">
    <location>
        <begin position="292"/>
        <end position="294"/>
    </location>
    <ligand>
        <name>substrate</name>
    </ligand>
</feature>
<feature type="binding site" evidence="1">
    <location>
        <position position="324"/>
    </location>
    <ligand>
        <name>substrate</name>
    </ligand>
</feature>
<feature type="binding site" evidence="1">
    <location>
        <position position="525"/>
    </location>
    <ligand>
        <name>substrate</name>
    </ligand>
</feature>
<sequence length="549" mass="63697">MLNQKIQNPNPDELMIEVDLCYELDPYELKLDEMIEAEPEPEMIEGLPASDALTPADRYLELFEHVQSAKIFPDSKTFPDCAPKMDPLDILIRYRKVRRHRDFDLRKFVENHFWLPEVYSSEYVSDPQNSLKEHIDQLWPVLTREPQDHIPWSSLLALPQSYIVPGGRFSETYYWDSYFTMLGLAESGREDLLKCMADNFAWMIENYGHIPNGNRTYYLSRSQPPVFALMVELFEEDGVRGARRYLDHLKMEYAFWMDGAESLIPNQAYRHVVRMPDGSLLNRYWDDRDTPRDESWLEDVETAKHSGRPPNEVYRDLRAGAASGWDYSSRWLRDTGRLASIRTTQFIPIDLNAFLFKLESAIANISALKGEKETEALFRQKASARRDAVNRYLWDDENGIYRDYDWRREQLALFSAAAIVPLYVGMANHEQADRLANAVRSRLLTPGGILASEYETGEQWDKPNGWAPLQWMAIQGFKMYGDDLLGDEIARSWLKTVNQFYLEQHKLIEKYHIADGVPREGGGGEYPLQDGFGWTNGVVRRLIGLYGEP</sequence>
<gene>
    <name evidence="1" type="primary">treF</name>
    <name type="ordered locus">EcSMS35_3823</name>
</gene>
<accession>B1LJ63</accession>
<comment type="function">
    <text evidence="1">Hydrolyzes trehalose to glucose. Could be involved, in cells returning to low osmolarity conditions, in the utilization of the accumulated cytoplasmic trehalose, which was synthesized in response to high osmolarity.</text>
</comment>
<comment type="catalytic activity">
    <reaction evidence="1">
        <text>alpha,alpha-trehalose + H2O = alpha-D-glucose + beta-D-glucose</text>
        <dbReference type="Rhea" id="RHEA:32675"/>
        <dbReference type="ChEBI" id="CHEBI:15377"/>
        <dbReference type="ChEBI" id="CHEBI:15903"/>
        <dbReference type="ChEBI" id="CHEBI:16551"/>
        <dbReference type="ChEBI" id="CHEBI:17925"/>
        <dbReference type="EC" id="3.2.1.28"/>
    </reaction>
</comment>
<comment type="pathway">
    <text evidence="1">Glycan degradation; trehalose degradation; D-glucose from alpha,alpha-trehalose: step 1/1.</text>
</comment>
<comment type="subunit">
    <text evidence="1">Monomer.</text>
</comment>
<comment type="subcellular location">
    <subcellularLocation>
        <location evidence="1">Cytoplasm</location>
    </subcellularLocation>
</comment>
<comment type="similarity">
    <text evidence="1">Belongs to the glycosyl hydrolase 37 family.</text>
</comment>
<organism>
    <name type="scientific">Escherichia coli (strain SMS-3-5 / SECEC)</name>
    <dbReference type="NCBI Taxonomy" id="439855"/>
    <lineage>
        <taxon>Bacteria</taxon>
        <taxon>Pseudomonadati</taxon>
        <taxon>Pseudomonadota</taxon>
        <taxon>Gammaproteobacteria</taxon>
        <taxon>Enterobacterales</taxon>
        <taxon>Enterobacteriaceae</taxon>
        <taxon>Escherichia</taxon>
    </lineage>
</organism>
<reference key="1">
    <citation type="journal article" date="2008" name="J. Bacteriol.">
        <title>Insights into the environmental resistance gene pool from the genome sequence of the multidrug-resistant environmental isolate Escherichia coli SMS-3-5.</title>
        <authorList>
            <person name="Fricke W.F."/>
            <person name="Wright M.S."/>
            <person name="Lindell A.H."/>
            <person name="Harkins D.M."/>
            <person name="Baker-Austin C."/>
            <person name="Ravel J."/>
            <person name="Stepanauskas R."/>
        </authorList>
    </citation>
    <scope>NUCLEOTIDE SEQUENCE [LARGE SCALE GENOMIC DNA]</scope>
    <source>
        <strain>SMS-3-5 / SECEC</strain>
    </source>
</reference>
<protein>
    <recommendedName>
        <fullName evidence="1">Cytoplasmic trehalase</fullName>
        <ecNumber evidence="1">3.2.1.28</ecNumber>
    </recommendedName>
    <alternativeName>
        <fullName evidence="1">Alpha,alpha-trehalase</fullName>
    </alternativeName>
    <alternativeName>
        <fullName evidence="1">Alpha,alpha-trehalose glucohydrolase</fullName>
    </alternativeName>
</protein>